<dbReference type="EC" id="2.1.2.9" evidence="1"/>
<dbReference type="EMBL" id="CT573326">
    <property type="protein sequence ID" value="CAK13018.1"/>
    <property type="molecule type" value="Genomic_DNA"/>
</dbReference>
<dbReference type="RefSeq" id="WP_011531479.1">
    <property type="nucleotide sequence ID" value="NC_008027.1"/>
</dbReference>
<dbReference type="SMR" id="Q1IH35"/>
<dbReference type="STRING" id="384676.PSEEN0024"/>
<dbReference type="GeneID" id="32803392"/>
<dbReference type="KEGG" id="pen:PSEEN0024"/>
<dbReference type="eggNOG" id="COG0223">
    <property type="taxonomic scope" value="Bacteria"/>
</dbReference>
<dbReference type="HOGENOM" id="CLU_033347_1_2_6"/>
<dbReference type="OrthoDB" id="9802815at2"/>
<dbReference type="Proteomes" id="UP000000658">
    <property type="component" value="Chromosome"/>
</dbReference>
<dbReference type="GO" id="GO:0005829">
    <property type="term" value="C:cytosol"/>
    <property type="evidence" value="ECO:0007669"/>
    <property type="project" value="TreeGrafter"/>
</dbReference>
<dbReference type="GO" id="GO:0004479">
    <property type="term" value="F:methionyl-tRNA formyltransferase activity"/>
    <property type="evidence" value="ECO:0007669"/>
    <property type="project" value="UniProtKB-UniRule"/>
</dbReference>
<dbReference type="CDD" id="cd08646">
    <property type="entry name" value="FMT_core_Met-tRNA-FMT_N"/>
    <property type="match status" value="1"/>
</dbReference>
<dbReference type="CDD" id="cd08704">
    <property type="entry name" value="Met_tRNA_FMT_C"/>
    <property type="match status" value="1"/>
</dbReference>
<dbReference type="FunFam" id="3.40.50.170:FF:000003">
    <property type="entry name" value="Methionyl-tRNA formyltransferase"/>
    <property type="match status" value="1"/>
</dbReference>
<dbReference type="Gene3D" id="3.10.25.10">
    <property type="entry name" value="Formyl transferase, C-terminal domain"/>
    <property type="match status" value="1"/>
</dbReference>
<dbReference type="Gene3D" id="3.40.50.170">
    <property type="entry name" value="Formyl transferase, N-terminal domain"/>
    <property type="match status" value="1"/>
</dbReference>
<dbReference type="HAMAP" id="MF_00182">
    <property type="entry name" value="Formyl_trans"/>
    <property type="match status" value="1"/>
</dbReference>
<dbReference type="InterPro" id="IPR005794">
    <property type="entry name" value="Fmt"/>
</dbReference>
<dbReference type="InterPro" id="IPR005793">
    <property type="entry name" value="Formyl_trans_C"/>
</dbReference>
<dbReference type="InterPro" id="IPR037022">
    <property type="entry name" value="Formyl_trans_C_sf"/>
</dbReference>
<dbReference type="InterPro" id="IPR002376">
    <property type="entry name" value="Formyl_transf_N"/>
</dbReference>
<dbReference type="InterPro" id="IPR036477">
    <property type="entry name" value="Formyl_transf_N_sf"/>
</dbReference>
<dbReference type="InterPro" id="IPR011034">
    <property type="entry name" value="Formyl_transferase-like_C_sf"/>
</dbReference>
<dbReference type="InterPro" id="IPR001555">
    <property type="entry name" value="GART_AS"/>
</dbReference>
<dbReference type="InterPro" id="IPR044135">
    <property type="entry name" value="Met-tRNA-FMT_C"/>
</dbReference>
<dbReference type="InterPro" id="IPR041711">
    <property type="entry name" value="Met-tRNA-FMT_N"/>
</dbReference>
<dbReference type="NCBIfam" id="TIGR00460">
    <property type="entry name" value="fmt"/>
    <property type="match status" value="1"/>
</dbReference>
<dbReference type="PANTHER" id="PTHR11138">
    <property type="entry name" value="METHIONYL-TRNA FORMYLTRANSFERASE"/>
    <property type="match status" value="1"/>
</dbReference>
<dbReference type="PANTHER" id="PTHR11138:SF5">
    <property type="entry name" value="METHIONYL-TRNA FORMYLTRANSFERASE, MITOCHONDRIAL"/>
    <property type="match status" value="1"/>
</dbReference>
<dbReference type="Pfam" id="PF02911">
    <property type="entry name" value="Formyl_trans_C"/>
    <property type="match status" value="1"/>
</dbReference>
<dbReference type="Pfam" id="PF00551">
    <property type="entry name" value="Formyl_trans_N"/>
    <property type="match status" value="1"/>
</dbReference>
<dbReference type="SUPFAM" id="SSF50486">
    <property type="entry name" value="FMT C-terminal domain-like"/>
    <property type="match status" value="1"/>
</dbReference>
<dbReference type="SUPFAM" id="SSF53328">
    <property type="entry name" value="Formyltransferase"/>
    <property type="match status" value="1"/>
</dbReference>
<dbReference type="PROSITE" id="PS00373">
    <property type="entry name" value="GART"/>
    <property type="match status" value="1"/>
</dbReference>
<proteinExistence type="inferred from homology"/>
<comment type="function">
    <text evidence="1">Attaches a formyl group to the free amino group of methionyl-tRNA(fMet). The formyl group appears to play a dual role in the initiator identity of N-formylmethionyl-tRNA by promoting its recognition by IF2 and preventing the misappropriation of this tRNA by the elongation apparatus.</text>
</comment>
<comment type="catalytic activity">
    <reaction evidence="1">
        <text>L-methionyl-tRNA(fMet) + (6R)-10-formyltetrahydrofolate = N-formyl-L-methionyl-tRNA(fMet) + (6S)-5,6,7,8-tetrahydrofolate + H(+)</text>
        <dbReference type="Rhea" id="RHEA:24380"/>
        <dbReference type="Rhea" id="RHEA-COMP:9952"/>
        <dbReference type="Rhea" id="RHEA-COMP:9953"/>
        <dbReference type="ChEBI" id="CHEBI:15378"/>
        <dbReference type="ChEBI" id="CHEBI:57453"/>
        <dbReference type="ChEBI" id="CHEBI:78530"/>
        <dbReference type="ChEBI" id="CHEBI:78844"/>
        <dbReference type="ChEBI" id="CHEBI:195366"/>
        <dbReference type="EC" id="2.1.2.9"/>
    </reaction>
</comment>
<comment type="similarity">
    <text evidence="1">Belongs to the Fmt family.</text>
</comment>
<name>FMT_PSEE4</name>
<gene>
    <name evidence="1" type="primary">fmt</name>
    <name type="ordered locus">PSEEN0024</name>
</gene>
<protein>
    <recommendedName>
        <fullName evidence="1">Methionyl-tRNA formyltransferase</fullName>
        <ecNumber evidence="1">2.1.2.9</ecNumber>
    </recommendedName>
</protein>
<evidence type="ECO:0000255" key="1">
    <source>
        <dbReference type="HAMAP-Rule" id="MF_00182"/>
    </source>
</evidence>
<accession>Q1IH35</accession>
<sequence length="310" mass="32758">MRIVFAGTPEFAAEHLKALLDSPYEIVAVYTQPDRPAGRGQKLMPSAVKALAVAHDIPVYQPQTLRNPEAQAELAALKPDLMVVVAYGLILPQVVLDIPRLGCINSHASLLPRWRGAAPIQRAVEAGDAESGVTVMRMEAGLDTGPMLLKVVTPISAEDTGGTLHDRLAAMGPGAVVQAIAGLADGSLQGEVQDDTLATYAHKLNKDEARIDWNRPAVELERLIRAFNPWPVCHSTLDGESVKVLAANLSTGKGTPGEILSASKDGLVVACGDGALSLTRLQLPGGKALAFSDLFNSRREKFAGGKVLGQ</sequence>
<feature type="chain" id="PRO_1000020130" description="Methionyl-tRNA formyltransferase">
    <location>
        <begin position="1"/>
        <end position="310"/>
    </location>
</feature>
<feature type="binding site" evidence="1">
    <location>
        <begin position="109"/>
        <end position="112"/>
    </location>
    <ligand>
        <name>(6S)-5,6,7,8-tetrahydrofolate</name>
        <dbReference type="ChEBI" id="CHEBI:57453"/>
    </ligand>
</feature>
<organism>
    <name type="scientific">Pseudomonas entomophila (strain L48)</name>
    <dbReference type="NCBI Taxonomy" id="384676"/>
    <lineage>
        <taxon>Bacteria</taxon>
        <taxon>Pseudomonadati</taxon>
        <taxon>Pseudomonadota</taxon>
        <taxon>Gammaproteobacteria</taxon>
        <taxon>Pseudomonadales</taxon>
        <taxon>Pseudomonadaceae</taxon>
        <taxon>Pseudomonas</taxon>
    </lineage>
</organism>
<reference key="1">
    <citation type="journal article" date="2006" name="Nat. Biotechnol.">
        <title>Complete genome sequence of the entomopathogenic and metabolically versatile soil bacterium Pseudomonas entomophila.</title>
        <authorList>
            <person name="Vodovar N."/>
            <person name="Vallenet D."/>
            <person name="Cruveiller S."/>
            <person name="Rouy Z."/>
            <person name="Barbe V."/>
            <person name="Acosta C."/>
            <person name="Cattolico L."/>
            <person name="Jubin C."/>
            <person name="Lajus A."/>
            <person name="Segurens B."/>
            <person name="Vacherie B."/>
            <person name="Wincker P."/>
            <person name="Weissenbach J."/>
            <person name="Lemaitre B."/>
            <person name="Medigue C."/>
            <person name="Boccard F."/>
        </authorList>
    </citation>
    <scope>NUCLEOTIDE SEQUENCE [LARGE SCALE GENOMIC DNA]</scope>
    <source>
        <strain>L48</strain>
    </source>
</reference>
<keyword id="KW-0648">Protein biosynthesis</keyword>
<keyword id="KW-0808">Transferase</keyword>